<organism>
    <name type="scientific">Aspergillus terreus (strain NIH 2624 / FGSC A1156)</name>
    <dbReference type="NCBI Taxonomy" id="341663"/>
    <lineage>
        <taxon>Eukaryota</taxon>
        <taxon>Fungi</taxon>
        <taxon>Dikarya</taxon>
        <taxon>Ascomycota</taxon>
        <taxon>Pezizomycotina</taxon>
        <taxon>Eurotiomycetes</taxon>
        <taxon>Eurotiomycetidae</taxon>
        <taxon>Eurotiales</taxon>
        <taxon>Aspergillaceae</taxon>
        <taxon>Aspergillus</taxon>
        <taxon>Aspergillus subgen. Circumdati</taxon>
    </lineage>
</organism>
<keyword id="KW-0961">Cell wall biogenesis/degradation</keyword>
<keyword id="KW-1015">Disulfide bond</keyword>
<keyword id="KW-0326">Glycosidase</keyword>
<keyword id="KW-0378">Hydrolase</keyword>
<keyword id="KW-1185">Reference proteome</keyword>
<keyword id="KW-0677">Repeat</keyword>
<keyword id="KW-0964">Secreted</keyword>
<keyword id="KW-0732">Signal</keyword>
<keyword id="KW-0865">Zymogen</keyword>
<proteinExistence type="inferred from homology"/>
<accession>Q0CMU3</accession>
<gene>
    <name type="primary">pgaI</name>
    <name type="synonym">pg1</name>
    <name type="synonym">pga1</name>
    <name type="ORF">ATEG_04991</name>
</gene>
<protein>
    <recommendedName>
        <fullName>Probable endopolygalacturonase I</fullName>
        <ecNumber>3.2.1.15</ecNumber>
    </recommendedName>
    <alternativeName>
        <fullName>Pectinase 1</fullName>
    </alternativeName>
    <alternativeName>
        <fullName>Polygalacturonase I</fullName>
        <shortName>PG-I</shortName>
    </alternativeName>
</protein>
<feature type="signal peptide" evidence="2">
    <location>
        <begin position="1"/>
        <end position="18"/>
    </location>
</feature>
<feature type="propeptide" id="PRO_0000393624" evidence="2">
    <location>
        <begin position="19"/>
        <end position="31"/>
    </location>
</feature>
<feature type="chain" id="PRO_0000393625" description="Probable endopolygalacturonase I">
    <location>
        <begin position="32"/>
        <end position="368"/>
    </location>
</feature>
<feature type="repeat" description="PbH1 1">
    <location>
        <begin position="162"/>
        <end position="192"/>
    </location>
</feature>
<feature type="repeat" description="PbH1 2">
    <location>
        <begin position="193"/>
        <end position="214"/>
    </location>
</feature>
<feature type="repeat" description="PbH1 3">
    <location>
        <begin position="215"/>
        <end position="235"/>
    </location>
</feature>
<feature type="repeat" description="PbH1 4">
    <location>
        <begin position="244"/>
        <end position="265"/>
    </location>
</feature>
<feature type="repeat" description="PbH1 5">
    <location>
        <begin position="273"/>
        <end position="295"/>
    </location>
</feature>
<feature type="repeat" description="PbH1 6">
    <location>
        <begin position="307"/>
        <end position="328"/>
    </location>
</feature>
<feature type="active site" description="Proton donor" evidence="3">
    <location>
        <position position="207"/>
    </location>
</feature>
<feature type="active site" evidence="3">
    <location>
        <position position="229"/>
    </location>
</feature>
<feature type="disulfide bond" evidence="1">
    <location>
        <begin position="35"/>
        <end position="50"/>
    </location>
</feature>
<feature type="disulfide bond" evidence="1">
    <location>
        <begin position="209"/>
        <end position="225"/>
    </location>
</feature>
<feature type="disulfide bond" evidence="1">
    <location>
        <begin position="335"/>
        <end position="340"/>
    </location>
</feature>
<feature type="disulfide bond" evidence="1">
    <location>
        <begin position="359"/>
        <end position="368"/>
    </location>
</feature>
<name>PGLR1_ASPTN</name>
<sequence length="368" mass="38144">MHSFQLLGLAALGSLVAAAPSPSRVSDLTERSSSCTFTDAAKASSSASSCSSIVLKDIAVPAGKTLDLSHVKDGTTITFEGTTTFGYKEWKGPLIRLAGKDITVTMAKGAVIDGEGSRWWDGKGTNGGKTKPKFLYAHKLEDSTIKGLNIKNTPVQAISVQANNLHLTDITIDNSDGDSKGGHNTDGFDISESNGVYISGANVKNQDDCIAINSGKNIEFTGGTCSGGHGLSIGSIGGRDDNTVQGVKITDSTVTNSDNGIRIKTIVDETGSVSDVTYSNIKLSGIHKKGIVIQQDYKNGGPTGKPSNGIPIKDVTVDGITGSVDSKATPVYILCGSGSCSDWTWKNVKLSGGKSSSECKNLPSGVSC</sequence>
<reference key="1">
    <citation type="submission" date="2005-09" db="EMBL/GenBank/DDBJ databases">
        <title>Annotation of the Aspergillus terreus NIH2624 genome.</title>
        <authorList>
            <person name="Birren B.W."/>
            <person name="Lander E.S."/>
            <person name="Galagan J.E."/>
            <person name="Nusbaum C."/>
            <person name="Devon K."/>
            <person name="Henn M."/>
            <person name="Ma L.-J."/>
            <person name="Jaffe D.B."/>
            <person name="Butler J."/>
            <person name="Alvarez P."/>
            <person name="Gnerre S."/>
            <person name="Grabherr M."/>
            <person name="Kleber M."/>
            <person name="Mauceli E.W."/>
            <person name="Brockman W."/>
            <person name="Rounsley S."/>
            <person name="Young S.K."/>
            <person name="LaButti K."/>
            <person name="Pushparaj V."/>
            <person name="DeCaprio D."/>
            <person name="Crawford M."/>
            <person name="Koehrsen M."/>
            <person name="Engels R."/>
            <person name="Montgomery P."/>
            <person name="Pearson M."/>
            <person name="Howarth C."/>
            <person name="Larson L."/>
            <person name="Luoma S."/>
            <person name="White J."/>
            <person name="Alvarado L."/>
            <person name="Kodira C.D."/>
            <person name="Zeng Q."/>
            <person name="Oleary S."/>
            <person name="Yandava C."/>
            <person name="Denning D.W."/>
            <person name="Nierman W.C."/>
            <person name="Milne T."/>
            <person name="Madden K."/>
        </authorList>
    </citation>
    <scope>NUCLEOTIDE SEQUENCE [LARGE SCALE GENOMIC DNA]</scope>
    <source>
        <strain>NIH 2624 / FGSC A1156</strain>
    </source>
</reference>
<comment type="function">
    <text evidence="1">Involved in maceration and soft-rotting of plant tissue. Hydrolyzes the 1,4-alpha glycosidic bonds of de-esterified pectate in the smooth region of the plant cell wall (By similarity).</text>
</comment>
<comment type="catalytic activity">
    <reaction>
        <text>(1,4-alpha-D-galacturonosyl)n+m + H2O = (1,4-alpha-D-galacturonosyl)n + (1,4-alpha-D-galacturonosyl)m.</text>
        <dbReference type="EC" id="3.2.1.15"/>
    </reaction>
</comment>
<comment type="subcellular location">
    <subcellularLocation>
        <location evidence="1">Secreted</location>
    </subcellularLocation>
</comment>
<comment type="similarity">
    <text evidence="4">Belongs to the glycosyl hydrolase 28 family.</text>
</comment>
<dbReference type="EC" id="3.2.1.15"/>
<dbReference type="EMBL" id="CH476600">
    <property type="protein sequence ID" value="EAU34060.1"/>
    <property type="molecule type" value="Genomic_DNA"/>
</dbReference>
<dbReference type="RefSeq" id="XP_001214169.1">
    <property type="nucleotide sequence ID" value="XM_001214169.1"/>
</dbReference>
<dbReference type="SMR" id="Q0CMU3"/>
<dbReference type="STRING" id="341663.Q0CMU3"/>
<dbReference type="EnsemblFungi" id="EAU34060">
    <property type="protein sequence ID" value="EAU34060"/>
    <property type="gene ID" value="ATEG_04991"/>
</dbReference>
<dbReference type="GeneID" id="4321227"/>
<dbReference type="VEuPathDB" id="FungiDB:ATEG_04991"/>
<dbReference type="eggNOG" id="ENOG502QST2">
    <property type="taxonomic scope" value="Eukaryota"/>
</dbReference>
<dbReference type="HOGENOM" id="CLU_040116_0_0_1"/>
<dbReference type="OMA" id="WVNNLVV"/>
<dbReference type="OrthoDB" id="1546079at2759"/>
<dbReference type="Proteomes" id="UP000007963">
    <property type="component" value="Unassembled WGS sequence"/>
</dbReference>
<dbReference type="GO" id="GO:0005576">
    <property type="term" value="C:extracellular region"/>
    <property type="evidence" value="ECO:0000250"/>
    <property type="project" value="UniProtKB"/>
</dbReference>
<dbReference type="GO" id="GO:0047911">
    <property type="term" value="F:galacturan 1,4-alpha-galacturonidase activity"/>
    <property type="evidence" value="ECO:0000250"/>
    <property type="project" value="UniProtKB"/>
</dbReference>
<dbReference type="GO" id="GO:0004650">
    <property type="term" value="F:polygalacturonase activity"/>
    <property type="evidence" value="ECO:0000250"/>
    <property type="project" value="UniProtKB"/>
</dbReference>
<dbReference type="GO" id="GO:0071555">
    <property type="term" value="P:cell wall organization"/>
    <property type="evidence" value="ECO:0007669"/>
    <property type="project" value="UniProtKB-KW"/>
</dbReference>
<dbReference type="GO" id="GO:0045490">
    <property type="term" value="P:pectin catabolic process"/>
    <property type="evidence" value="ECO:0000250"/>
    <property type="project" value="UniProtKB"/>
</dbReference>
<dbReference type="FunFam" id="2.160.20.10:FF:000002">
    <property type="entry name" value="Endopolygalacturonase D"/>
    <property type="match status" value="1"/>
</dbReference>
<dbReference type="Gene3D" id="2.160.20.10">
    <property type="entry name" value="Single-stranded right-handed beta-helix, Pectin lyase-like"/>
    <property type="match status" value="1"/>
</dbReference>
<dbReference type="InterPro" id="IPR000743">
    <property type="entry name" value="Glyco_hydro_28"/>
</dbReference>
<dbReference type="InterPro" id="IPR050434">
    <property type="entry name" value="Glycosyl_hydrlase_28"/>
</dbReference>
<dbReference type="InterPro" id="IPR006626">
    <property type="entry name" value="PbH1"/>
</dbReference>
<dbReference type="InterPro" id="IPR012334">
    <property type="entry name" value="Pectin_lyas_fold"/>
</dbReference>
<dbReference type="InterPro" id="IPR011050">
    <property type="entry name" value="Pectin_lyase_fold/virulence"/>
</dbReference>
<dbReference type="PANTHER" id="PTHR31884:SF13">
    <property type="entry name" value="ENDOPOLYGALACTURONASE B"/>
    <property type="match status" value="1"/>
</dbReference>
<dbReference type="PANTHER" id="PTHR31884">
    <property type="entry name" value="POLYGALACTURONASE"/>
    <property type="match status" value="1"/>
</dbReference>
<dbReference type="Pfam" id="PF00295">
    <property type="entry name" value="Glyco_hydro_28"/>
    <property type="match status" value="1"/>
</dbReference>
<dbReference type="SMART" id="SM00710">
    <property type="entry name" value="PbH1"/>
    <property type="match status" value="6"/>
</dbReference>
<dbReference type="SUPFAM" id="SSF51126">
    <property type="entry name" value="Pectin lyase-like"/>
    <property type="match status" value="1"/>
</dbReference>
<dbReference type="PROSITE" id="PS00502">
    <property type="entry name" value="POLYGALACTURONASE"/>
    <property type="match status" value="1"/>
</dbReference>
<evidence type="ECO:0000250" key="1"/>
<evidence type="ECO:0000255" key="2"/>
<evidence type="ECO:0000255" key="3">
    <source>
        <dbReference type="PROSITE-ProRule" id="PRU10052"/>
    </source>
</evidence>
<evidence type="ECO:0000305" key="4"/>